<name>RL16_FRACC</name>
<proteinExistence type="inferred from homology"/>
<sequence>MLIPRKVAHRKQHHPGRTGAAKGGTRVTFGEYGIQALESAYVTNRQIESARIAMTRHIRRGGKVWINIYPDRPLTKKPAETRMGSGKGSPEWWVANVKPGRVLFELSGVAEPVAREAMRRAIHKLPMKCRFVVREGGA</sequence>
<gene>
    <name evidence="1" type="primary">rplP</name>
    <name type="ordered locus">Francci3_0589</name>
</gene>
<dbReference type="EMBL" id="CP000249">
    <property type="protein sequence ID" value="ABD09973.1"/>
    <property type="molecule type" value="Genomic_DNA"/>
</dbReference>
<dbReference type="RefSeq" id="WP_009740521.1">
    <property type="nucleotide sequence ID" value="NZ_MSEA01000657.1"/>
</dbReference>
<dbReference type="SMR" id="Q2JFG9"/>
<dbReference type="STRING" id="106370.Francci3_0589"/>
<dbReference type="KEGG" id="fra:Francci3_0589"/>
<dbReference type="eggNOG" id="COG0197">
    <property type="taxonomic scope" value="Bacteria"/>
</dbReference>
<dbReference type="HOGENOM" id="CLU_078858_2_1_11"/>
<dbReference type="OrthoDB" id="9802589at2"/>
<dbReference type="PhylomeDB" id="Q2JFG9"/>
<dbReference type="Proteomes" id="UP000001937">
    <property type="component" value="Chromosome"/>
</dbReference>
<dbReference type="GO" id="GO:0022625">
    <property type="term" value="C:cytosolic large ribosomal subunit"/>
    <property type="evidence" value="ECO:0007669"/>
    <property type="project" value="TreeGrafter"/>
</dbReference>
<dbReference type="GO" id="GO:0019843">
    <property type="term" value="F:rRNA binding"/>
    <property type="evidence" value="ECO:0007669"/>
    <property type="project" value="UniProtKB-UniRule"/>
</dbReference>
<dbReference type="GO" id="GO:0003735">
    <property type="term" value="F:structural constituent of ribosome"/>
    <property type="evidence" value="ECO:0007669"/>
    <property type="project" value="InterPro"/>
</dbReference>
<dbReference type="GO" id="GO:0000049">
    <property type="term" value="F:tRNA binding"/>
    <property type="evidence" value="ECO:0007669"/>
    <property type="project" value="UniProtKB-KW"/>
</dbReference>
<dbReference type="GO" id="GO:0006412">
    <property type="term" value="P:translation"/>
    <property type="evidence" value="ECO:0007669"/>
    <property type="project" value="UniProtKB-UniRule"/>
</dbReference>
<dbReference type="CDD" id="cd01433">
    <property type="entry name" value="Ribosomal_L16_L10e"/>
    <property type="match status" value="1"/>
</dbReference>
<dbReference type="FunFam" id="3.90.1170.10:FF:000001">
    <property type="entry name" value="50S ribosomal protein L16"/>
    <property type="match status" value="1"/>
</dbReference>
<dbReference type="Gene3D" id="3.90.1170.10">
    <property type="entry name" value="Ribosomal protein L10e/L16"/>
    <property type="match status" value="1"/>
</dbReference>
<dbReference type="HAMAP" id="MF_01342">
    <property type="entry name" value="Ribosomal_uL16"/>
    <property type="match status" value="1"/>
</dbReference>
<dbReference type="InterPro" id="IPR047873">
    <property type="entry name" value="Ribosomal_uL16"/>
</dbReference>
<dbReference type="InterPro" id="IPR000114">
    <property type="entry name" value="Ribosomal_uL16_bact-type"/>
</dbReference>
<dbReference type="InterPro" id="IPR020798">
    <property type="entry name" value="Ribosomal_uL16_CS"/>
</dbReference>
<dbReference type="InterPro" id="IPR016180">
    <property type="entry name" value="Ribosomal_uL16_dom"/>
</dbReference>
<dbReference type="InterPro" id="IPR036920">
    <property type="entry name" value="Ribosomal_uL16_sf"/>
</dbReference>
<dbReference type="NCBIfam" id="TIGR01164">
    <property type="entry name" value="rplP_bact"/>
    <property type="match status" value="1"/>
</dbReference>
<dbReference type="PANTHER" id="PTHR12220">
    <property type="entry name" value="50S/60S RIBOSOMAL PROTEIN L16"/>
    <property type="match status" value="1"/>
</dbReference>
<dbReference type="PANTHER" id="PTHR12220:SF13">
    <property type="entry name" value="LARGE RIBOSOMAL SUBUNIT PROTEIN UL16M"/>
    <property type="match status" value="1"/>
</dbReference>
<dbReference type="Pfam" id="PF00252">
    <property type="entry name" value="Ribosomal_L16"/>
    <property type="match status" value="1"/>
</dbReference>
<dbReference type="PRINTS" id="PR00060">
    <property type="entry name" value="RIBOSOMALL16"/>
</dbReference>
<dbReference type="SUPFAM" id="SSF54686">
    <property type="entry name" value="Ribosomal protein L16p/L10e"/>
    <property type="match status" value="1"/>
</dbReference>
<dbReference type="PROSITE" id="PS00586">
    <property type="entry name" value="RIBOSOMAL_L16_1"/>
    <property type="match status" value="1"/>
</dbReference>
<dbReference type="PROSITE" id="PS00701">
    <property type="entry name" value="RIBOSOMAL_L16_2"/>
    <property type="match status" value="1"/>
</dbReference>
<comment type="function">
    <text evidence="1">Binds 23S rRNA and is also seen to make contacts with the A and possibly P site tRNAs.</text>
</comment>
<comment type="subunit">
    <text evidence="1">Part of the 50S ribosomal subunit.</text>
</comment>
<comment type="similarity">
    <text evidence="1">Belongs to the universal ribosomal protein uL16 family.</text>
</comment>
<protein>
    <recommendedName>
        <fullName evidence="1">Large ribosomal subunit protein uL16</fullName>
    </recommendedName>
    <alternativeName>
        <fullName evidence="3">50S ribosomal protein L16</fullName>
    </alternativeName>
</protein>
<evidence type="ECO:0000255" key="1">
    <source>
        <dbReference type="HAMAP-Rule" id="MF_01342"/>
    </source>
</evidence>
<evidence type="ECO:0000256" key="2">
    <source>
        <dbReference type="SAM" id="MobiDB-lite"/>
    </source>
</evidence>
<evidence type="ECO:0000305" key="3"/>
<organism>
    <name type="scientific">Frankia casuarinae (strain DSM 45818 / CECT 9043 / HFP020203 / CcI3)</name>
    <dbReference type="NCBI Taxonomy" id="106370"/>
    <lineage>
        <taxon>Bacteria</taxon>
        <taxon>Bacillati</taxon>
        <taxon>Actinomycetota</taxon>
        <taxon>Actinomycetes</taxon>
        <taxon>Frankiales</taxon>
        <taxon>Frankiaceae</taxon>
        <taxon>Frankia</taxon>
    </lineage>
</organism>
<feature type="chain" id="PRO_0000251636" description="Large ribosomal subunit protein uL16">
    <location>
        <begin position="1"/>
        <end position="138"/>
    </location>
</feature>
<feature type="region of interest" description="Disordered" evidence="2">
    <location>
        <begin position="1"/>
        <end position="24"/>
    </location>
</feature>
<feature type="compositionally biased region" description="Basic residues" evidence="2">
    <location>
        <begin position="1"/>
        <end position="16"/>
    </location>
</feature>
<reference key="1">
    <citation type="journal article" date="2007" name="Genome Res.">
        <title>Genome characteristics of facultatively symbiotic Frankia sp. strains reflect host range and host plant biogeography.</title>
        <authorList>
            <person name="Normand P."/>
            <person name="Lapierre P."/>
            <person name="Tisa L.S."/>
            <person name="Gogarten J.P."/>
            <person name="Alloisio N."/>
            <person name="Bagnarol E."/>
            <person name="Bassi C.A."/>
            <person name="Berry A.M."/>
            <person name="Bickhart D.M."/>
            <person name="Choisne N."/>
            <person name="Couloux A."/>
            <person name="Cournoyer B."/>
            <person name="Cruveiller S."/>
            <person name="Daubin V."/>
            <person name="Demange N."/>
            <person name="Francino M.P."/>
            <person name="Goltsman E."/>
            <person name="Huang Y."/>
            <person name="Kopp O.R."/>
            <person name="Labarre L."/>
            <person name="Lapidus A."/>
            <person name="Lavire C."/>
            <person name="Marechal J."/>
            <person name="Martinez M."/>
            <person name="Mastronunzio J.E."/>
            <person name="Mullin B.C."/>
            <person name="Niemann J."/>
            <person name="Pujic P."/>
            <person name="Rawnsley T."/>
            <person name="Rouy Z."/>
            <person name="Schenowitz C."/>
            <person name="Sellstedt A."/>
            <person name="Tavares F."/>
            <person name="Tomkins J.P."/>
            <person name="Vallenet D."/>
            <person name="Valverde C."/>
            <person name="Wall L.G."/>
            <person name="Wang Y."/>
            <person name="Medigue C."/>
            <person name="Benson D.R."/>
        </authorList>
    </citation>
    <scope>NUCLEOTIDE SEQUENCE [LARGE SCALE GENOMIC DNA]</scope>
    <source>
        <strain>DSM 45818 / CECT 9043 / HFP020203 / CcI3</strain>
    </source>
</reference>
<keyword id="KW-1185">Reference proteome</keyword>
<keyword id="KW-0687">Ribonucleoprotein</keyword>
<keyword id="KW-0689">Ribosomal protein</keyword>
<keyword id="KW-0694">RNA-binding</keyword>
<keyword id="KW-0699">rRNA-binding</keyword>
<keyword id="KW-0820">tRNA-binding</keyword>
<accession>Q2JFG9</accession>